<name>XYLA_THEMA</name>
<protein>
    <recommendedName>
        <fullName evidence="1">Xylose isomerase</fullName>
        <ecNumber evidence="1">5.3.1.5</ecNumber>
    </recommendedName>
</protein>
<dbReference type="EC" id="5.3.1.5" evidence="1"/>
<dbReference type="EMBL" id="AE000512">
    <property type="protein sequence ID" value="AAD36734.1"/>
    <property type="molecule type" value="Genomic_DNA"/>
</dbReference>
<dbReference type="PIR" id="A72225">
    <property type="entry name" value="A72225"/>
</dbReference>
<dbReference type="RefSeq" id="NP_229467.1">
    <property type="nucleotide sequence ID" value="NC_000853.1"/>
</dbReference>
<dbReference type="RefSeq" id="WP_004082185.1">
    <property type="nucleotide sequence ID" value="NZ_CP011107.1"/>
</dbReference>
<dbReference type="SMR" id="Q9X1Z5"/>
<dbReference type="FunCoup" id="Q9X1Z5">
    <property type="interactions" value="153"/>
</dbReference>
<dbReference type="STRING" id="243274.TM_1667"/>
<dbReference type="PaxDb" id="243274-THEMA_05910"/>
<dbReference type="EnsemblBacteria" id="AAD36734">
    <property type="protein sequence ID" value="AAD36734"/>
    <property type="gene ID" value="TM_1667"/>
</dbReference>
<dbReference type="KEGG" id="tma:TM1667"/>
<dbReference type="KEGG" id="tmi:THEMA_05910"/>
<dbReference type="KEGG" id="tmm:Tmari_1676"/>
<dbReference type="KEGG" id="tmw:THMA_1708"/>
<dbReference type="eggNOG" id="COG2115">
    <property type="taxonomic scope" value="Bacteria"/>
</dbReference>
<dbReference type="InParanoid" id="Q9X1Z5"/>
<dbReference type="OrthoDB" id="9763981at2"/>
<dbReference type="Proteomes" id="UP000008183">
    <property type="component" value="Chromosome"/>
</dbReference>
<dbReference type="GO" id="GO:0005737">
    <property type="term" value="C:cytoplasm"/>
    <property type="evidence" value="ECO:0007669"/>
    <property type="project" value="UniProtKB-SubCell"/>
</dbReference>
<dbReference type="GO" id="GO:0000287">
    <property type="term" value="F:magnesium ion binding"/>
    <property type="evidence" value="ECO:0007669"/>
    <property type="project" value="UniProtKB-UniRule"/>
</dbReference>
<dbReference type="GO" id="GO:0009045">
    <property type="term" value="F:xylose isomerase activity"/>
    <property type="evidence" value="ECO:0000318"/>
    <property type="project" value="GO_Central"/>
</dbReference>
<dbReference type="GO" id="GO:0042843">
    <property type="term" value="P:D-xylose catabolic process"/>
    <property type="evidence" value="ECO:0000318"/>
    <property type="project" value="GO_Central"/>
</dbReference>
<dbReference type="FunFam" id="3.20.20.150:FF:000002">
    <property type="entry name" value="Xylose isomerase"/>
    <property type="match status" value="1"/>
</dbReference>
<dbReference type="Gene3D" id="3.20.20.150">
    <property type="entry name" value="Divalent-metal-dependent TIM barrel enzymes"/>
    <property type="match status" value="1"/>
</dbReference>
<dbReference type="HAMAP" id="MF_00455">
    <property type="entry name" value="Xylose_isom_A"/>
    <property type="match status" value="1"/>
</dbReference>
<dbReference type="InterPro" id="IPR036237">
    <property type="entry name" value="Xyl_isomerase-like_sf"/>
</dbReference>
<dbReference type="InterPro" id="IPR013022">
    <property type="entry name" value="Xyl_isomerase-like_TIM-brl"/>
</dbReference>
<dbReference type="InterPro" id="IPR013452">
    <property type="entry name" value="Xylose_isom_bac"/>
</dbReference>
<dbReference type="InterPro" id="IPR001998">
    <property type="entry name" value="Xylose_isomerase"/>
</dbReference>
<dbReference type="NCBIfam" id="NF003998">
    <property type="entry name" value="PRK05474.1"/>
    <property type="match status" value="1"/>
</dbReference>
<dbReference type="NCBIfam" id="TIGR02630">
    <property type="entry name" value="xylose_isom_A"/>
    <property type="match status" value="1"/>
</dbReference>
<dbReference type="PANTHER" id="PTHR48408">
    <property type="match status" value="1"/>
</dbReference>
<dbReference type="PANTHER" id="PTHR48408:SF1">
    <property type="entry name" value="XYLOSE ISOMERASE"/>
    <property type="match status" value="1"/>
</dbReference>
<dbReference type="Pfam" id="PF01261">
    <property type="entry name" value="AP_endonuc_2"/>
    <property type="match status" value="1"/>
</dbReference>
<dbReference type="PRINTS" id="PR00688">
    <property type="entry name" value="XYLOSISMRASE"/>
</dbReference>
<dbReference type="SUPFAM" id="SSF51658">
    <property type="entry name" value="Xylose isomerase-like"/>
    <property type="match status" value="1"/>
</dbReference>
<dbReference type="PROSITE" id="PS51415">
    <property type="entry name" value="XYLOSE_ISOMERASE"/>
    <property type="match status" value="1"/>
</dbReference>
<organism>
    <name type="scientific">Thermotoga maritima (strain ATCC 43589 / DSM 3109 / JCM 10099 / NBRC 100826 / MSB8)</name>
    <dbReference type="NCBI Taxonomy" id="243274"/>
    <lineage>
        <taxon>Bacteria</taxon>
        <taxon>Thermotogati</taxon>
        <taxon>Thermotogota</taxon>
        <taxon>Thermotogae</taxon>
        <taxon>Thermotogales</taxon>
        <taxon>Thermotogaceae</taxon>
        <taxon>Thermotoga</taxon>
    </lineage>
</organism>
<gene>
    <name evidence="1" type="primary">xylA</name>
    <name type="ordered locus">TM_1667</name>
</gene>
<proteinExistence type="inferred from homology"/>
<feature type="chain" id="PRO_0000195813" description="Xylose isomerase">
    <location>
        <begin position="1"/>
        <end position="444"/>
    </location>
</feature>
<feature type="active site" evidence="1">
    <location>
        <position position="101"/>
    </location>
</feature>
<feature type="active site" evidence="1">
    <location>
        <position position="104"/>
    </location>
</feature>
<feature type="binding site" evidence="1">
    <location>
        <position position="232"/>
    </location>
    <ligand>
        <name>Mg(2+)</name>
        <dbReference type="ChEBI" id="CHEBI:18420"/>
        <label>1</label>
    </ligand>
</feature>
<feature type="binding site" evidence="1">
    <location>
        <position position="268"/>
    </location>
    <ligand>
        <name>Mg(2+)</name>
        <dbReference type="ChEBI" id="CHEBI:18420"/>
        <label>1</label>
    </ligand>
</feature>
<feature type="binding site" evidence="1">
    <location>
        <position position="268"/>
    </location>
    <ligand>
        <name>Mg(2+)</name>
        <dbReference type="ChEBI" id="CHEBI:18420"/>
        <label>2</label>
    </ligand>
</feature>
<feature type="binding site" evidence="1">
    <location>
        <position position="271"/>
    </location>
    <ligand>
        <name>Mg(2+)</name>
        <dbReference type="ChEBI" id="CHEBI:18420"/>
        <label>2</label>
    </ligand>
</feature>
<feature type="binding site" evidence="1">
    <location>
        <position position="296"/>
    </location>
    <ligand>
        <name>Mg(2+)</name>
        <dbReference type="ChEBI" id="CHEBI:18420"/>
        <label>1</label>
    </ligand>
</feature>
<feature type="binding site" evidence="1">
    <location>
        <position position="307"/>
    </location>
    <ligand>
        <name>Mg(2+)</name>
        <dbReference type="ChEBI" id="CHEBI:18420"/>
        <label>2</label>
    </ligand>
</feature>
<feature type="binding site" evidence="1">
    <location>
        <position position="309"/>
    </location>
    <ligand>
        <name>Mg(2+)</name>
        <dbReference type="ChEBI" id="CHEBI:18420"/>
        <label>2</label>
    </ligand>
</feature>
<feature type="binding site" evidence="1">
    <location>
        <position position="339"/>
    </location>
    <ligand>
        <name>Mg(2+)</name>
        <dbReference type="ChEBI" id="CHEBI:18420"/>
        <label>1</label>
    </ligand>
</feature>
<reference key="1">
    <citation type="journal article" date="1999" name="Nature">
        <title>Evidence for lateral gene transfer between Archaea and Bacteria from genome sequence of Thermotoga maritima.</title>
        <authorList>
            <person name="Nelson K.E."/>
            <person name="Clayton R.A."/>
            <person name="Gill S.R."/>
            <person name="Gwinn M.L."/>
            <person name="Dodson R.J."/>
            <person name="Haft D.H."/>
            <person name="Hickey E.K."/>
            <person name="Peterson J.D."/>
            <person name="Nelson W.C."/>
            <person name="Ketchum K.A."/>
            <person name="McDonald L.A."/>
            <person name="Utterback T.R."/>
            <person name="Malek J.A."/>
            <person name="Linher K.D."/>
            <person name="Garrett M.M."/>
            <person name="Stewart A.M."/>
            <person name="Cotton M.D."/>
            <person name="Pratt M.S."/>
            <person name="Phillips C.A."/>
            <person name="Richardson D.L."/>
            <person name="Heidelberg J.F."/>
            <person name="Sutton G.G."/>
            <person name="Fleischmann R.D."/>
            <person name="Eisen J.A."/>
            <person name="White O."/>
            <person name="Salzberg S.L."/>
            <person name="Smith H.O."/>
            <person name="Venter J.C."/>
            <person name="Fraser C.M."/>
        </authorList>
    </citation>
    <scope>NUCLEOTIDE SEQUENCE [LARGE SCALE GENOMIC DNA]</scope>
    <source>
        <strain>ATCC 43589 / DSM 3109 / JCM 10099 / NBRC 100826 / MSB8</strain>
    </source>
</reference>
<accession>Q9X1Z5</accession>
<evidence type="ECO:0000255" key="1">
    <source>
        <dbReference type="HAMAP-Rule" id="MF_00455"/>
    </source>
</evidence>
<keyword id="KW-0119">Carbohydrate metabolism</keyword>
<keyword id="KW-0963">Cytoplasm</keyword>
<keyword id="KW-0413">Isomerase</keyword>
<keyword id="KW-0460">Magnesium</keyword>
<keyword id="KW-0479">Metal-binding</keyword>
<keyword id="KW-1185">Reference proteome</keyword>
<keyword id="KW-0859">Xylose metabolism</keyword>
<sequence>MAEFFPEIPKIQFEGKESTNPLAFRFYDPNEVIDGKPLKDHLKFSVAFWHTFVNEGRDPFGDPTAERPWNRFSDPMDKAFARVDALFEFCEKLNIEYFCFHDRDIAPEGKTLRETNKILDKVVERIKERMKDSNVKLLWGTANLFSHPRYMHGAATTCSADVFAYAAAQVKKALEITKELGGEGYVFWGGREGYETLLNTDLGLELENLARFLRMAVEYAKKIGFTGQFLIEPKPKEPTKHQYDFDVATAYAFLKNHGLDEYFKFNIEANHATLAGHTFQHELRMARILGKLGSIDANQGDLLLGWDTDQFPTNIYDTTLAMYEVIKAGGFTKGGLNFDAKVRRASYKVEDLFIGHIAGMDTFALGFKIAYKLAKDGVFDKFIEEKYRSFKEGIGKEIVEGKTDFEKLEEYIIDKEDIELPSGKQEYLESLLNSYIVKTIAELR</sequence>
<comment type="catalytic activity">
    <reaction evidence="1">
        <text>alpha-D-xylose = alpha-D-xylulofuranose</text>
        <dbReference type="Rhea" id="RHEA:22816"/>
        <dbReference type="ChEBI" id="CHEBI:28518"/>
        <dbReference type="ChEBI" id="CHEBI:188998"/>
        <dbReference type="EC" id="5.3.1.5"/>
    </reaction>
</comment>
<comment type="cofactor">
    <cofactor evidence="1">
        <name>Mg(2+)</name>
        <dbReference type="ChEBI" id="CHEBI:18420"/>
    </cofactor>
    <text evidence="1">Binds 2 magnesium ions per subunit.</text>
</comment>
<comment type="subunit">
    <text evidence="1">Homotetramer.</text>
</comment>
<comment type="subcellular location">
    <subcellularLocation>
        <location evidence="1">Cytoplasm</location>
    </subcellularLocation>
</comment>
<comment type="similarity">
    <text evidence="1">Belongs to the xylose isomerase family.</text>
</comment>